<gene>
    <name evidence="1" type="primary">rpsR</name>
    <name type="ordered locus">BOV_0460</name>
</gene>
<keyword id="KW-0687">Ribonucleoprotein</keyword>
<keyword id="KW-0689">Ribosomal protein</keyword>
<keyword id="KW-0694">RNA-binding</keyword>
<keyword id="KW-0699">rRNA-binding</keyword>
<reference key="1">
    <citation type="journal article" date="2009" name="PLoS ONE">
        <title>Genome degradation in Brucella ovis corresponds with narrowing of its host range and tissue tropism.</title>
        <authorList>
            <person name="Tsolis R.M."/>
            <person name="Seshadri R."/>
            <person name="Santos R.L."/>
            <person name="Sangari F.J."/>
            <person name="Lobo J.M."/>
            <person name="de Jong M.F."/>
            <person name="Ren Q."/>
            <person name="Myers G."/>
            <person name="Brinkac L.M."/>
            <person name="Nelson W.C."/>
            <person name="Deboy R.T."/>
            <person name="Angiuoli S."/>
            <person name="Khouri H."/>
            <person name="Dimitrov G."/>
            <person name="Robinson J.R."/>
            <person name="Mulligan S."/>
            <person name="Walker R.L."/>
            <person name="Elzer P.E."/>
            <person name="Hassan K.A."/>
            <person name="Paulsen I.T."/>
        </authorList>
    </citation>
    <scope>NUCLEOTIDE SEQUENCE [LARGE SCALE GENOMIC DNA]</scope>
    <source>
        <strain>ATCC 25840 / 63/290 / NCTC 10512</strain>
    </source>
</reference>
<accession>A5VP26</accession>
<comment type="function">
    <text evidence="1">Binds as a heterodimer with protein bS6 to the central domain of the 16S rRNA, where it helps stabilize the platform of the 30S subunit.</text>
</comment>
<comment type="subunit">
    <text evidence="1">Part of the 30S ribosomal subunit. Forms a tight heterodimer with protein bS6.</text>
</comment>
<comment type="similarity">
    <text evidence="1">Belongs to the bacterial ribosomal protein bS18 family.</text>
</comment>
<sequence>MVDINQIPTRRPFHRRRKTCPFSGANAPKIDYKDVKLLQRYISERGKIVPSRITAVSQKKQRELAKAIKRARFLGLLPYVVK</sequence>
<protein>
    <recommendedName>
        <fullName evidence="1">Small ribosomal subunit protein bS18</fullName>
    </recommendedName>
    <alternativeName>
        <fullName evidence="3">30S ribosomal protein S18</fullName>
    </alternativeName>
</protein>
<proteinExistence type="inferred from homology"/>
<dbReference type="EMBL" id="CP000708">
    <property type="protein sequence ID" value="ABQ61637.1"/>
    <property type="molecule type" value="Genomic_DNA"/>
</dbReference>
<dbReference type="RefSeq" id="WP_002963610.1">
    <property type="nucleotide sequence ID" value="NC_009505.1"/>
</dbReference>
<dbReference type="SMR" id="A5VP26"/>
<dbReference type="GeneID" id="97914641"/>
<dbReference type="KEGG" id="bov:BOV_0460"/>
<dbReference type="HOGENOM" id="CLU_148710_2_2_5"/>
<dbReference type="Proteomes" id="UP000006383">
    <property type="component" value="Chromosome I"/>
</dbReference>
<dbReference type="GO" id="GO:0022627">
    <property type="term" value="C:cytosolic small ribosomal subunit"/>
    <property type="evidence" value="ECO:0007669"/>
    <property type="project" value="TreeGrafter"/>
</dbReference>
<dbReference type="GO" id="GO:0070181">
    <property type="term" value="F:small ribosomal subunit rRNA binding"/>
    <property type="evidence" value="ECO:0007669"/>
    <property type="project" value="TreeGrafter"/>
</dbReference>
<dbReference type="GO" id="GO:0003735">
    <property type="term" value="F:structural constituent of ribosome"/>
    <property type="evidence" value="ECO:0007669"/>
    <property type="project" value="InterPro"/>
</dbReference>
<dbReference type="GO" id="GO:0006412">
    <property type="term" value="P:translation"/>
    <property type="evidence" value="ECO:0007669"/>
    <property type="project" value="UniProtKB-UniRule"/>
</dbReference>
<dbReference type="Gene3D" id="4.10.640.10">
    <property type="entry name" value="Ribosomal protein S18"/>
    <property type="match status" value="1"/>
</dbReference>
<dbReference type="HAMAP" id="MF_00270">
    <property type="entry name" value="Ribosomal_bS18"/>
    <property type="match status" value="1"/>
</dbReference>
<dbReference type="InterPro" id="IPR001648">
    <property type="entry name" value="Ribosomal_bS18"/>
</dbReference>
<dbReference type="InterPro" id="IPR018275">
    <property type="entry name" value="Ribosomal_bS18_CS"/>
</dbReference>
<dbReference type="InterPro" id="IPR036870">
    <property type="entry name" value="Ribosomal_bS18_sf"/>
</dbReference>
<dbReference type="NCBIfam" id="TIGR00165">
    <property type="entry name" value="S18"/>
    <property type="match status" value="1"/>
</dbReference>
<dbReference type="PANTHER" id="PTHR13479">
    <property type="entry name" value="30S RIBOSOMAL PROTEIN S18"/>
    <property type="match status" value="1"/>
</dbReference>
<dbReference type="PANTHER" id="PTHR13479:SF40">
    <property type="entry name" value="SMALL RIBOSOMAL SUBUNIT PROTEIN BS18M"/>
    <property type="match status" value="1"/>
</dbReference>
<dbReference type="Pfam" id="PF01084">
    <property type="entry name" value="Ribosomal_S18"/>
    <property type="match status" value="1"/>
</dbReference>
<dbReference type="PRINTS" id="PR00974">
    <property type="entry name" value="RIBOSOMALS18"/>
</dbReference>
<dbReference type="SUPFAM" id="SSF46911">
    <property type="entry name" value="Ribosomal protein S18"/>
    <property type="match status" value="1"/>
</dbReference>
<dbReference type="PROSITE" id="PS00057">
    <property type="entry name" value="RIBOSOMAL_S18"/>
    <property type="match status" value="1"/>
</dbReference>
<organism>
    <name type="scientific">Brucella ovis (strain ATCC 25840 / 63/290 / NCTC 10512)</name>
    <dbReference type="NCBI Taxonomy" id="444178"/>
    <lineage>
        <taxon>Bacteria</taxon>
        <taxon>Pseudomonadati</taxon>
        <taxon>Pseudomonadota</taxon>
        <taxon>Alphaproteobacteria</taxon>
        <taxon>Hyphomicrobiales</taxon>
        <taxon>Brucellaceae</taxon>
        <taxon>Brucella/Ochrobactrum group</taxon>
        <taxon>Brucella</taxon>
    </lineage>
</organism>
<feature type="chain" id="PRO_1000003455" description="Small ribosomal subunit protein bS18">
    <location>
        <begin position="1"/>
        <end position="82"/>
    </location>
</feature>
<feature type="region of interest" description="Disordered" evidence="2">
    <location>
        <begin position="1"/>
        <end position="20"/>
    </location>
</feature>
<evidence type="ECO:0000255" key="1">
    <source>
        <dbReference type="HAMAP-Rule" id="MF_00270"/>
    </source>
</evidence>
<evidence type="ECO:0000256" key="2">
    <source>
        <dbReference type="SAM" id="MobiDB-lite"/>
    </source>
</evidence>
<evidence type="ECO:0000305" key="3"/>
<name>RS18_BRUO2</name>